<evidence type="ECO:0000250" key="1"/>
<evidence type="ECO:0000255" key="2"/>
<evidence type="ECO:0000303" key="3">
    <source>
    </source>
</evidence>
<evidence type="ECO:0000303" key="4">
    <source>
    </source>
</evidence>
<evidence type="ECO:0000305" key="5"/>
<evidence type="ECO:0000305" key="6">
    <source>
    </source>
</evidence>
<accession>D2Y173</accession>
<accession>D6C4H7</accession>
<dbReference type="EMBL" id="FJ959119">
    <property type="protein sequence ID" value="ADB93089.1"/>
    <property type="molecule type" value="Genomic_DNA"/>
</dbReference>
<dbReference type="EMBL" id="GU290203">
    <property type="protein sequence ID" value="ADB43130.1"/>
    <property type="molecule type" value="mRNA"/>
</dbReference>
<dbReference type="ConoServer" id="4005">
    <property type="toxin name" value="Cal1.3 precursor"/>
</dbReference>
<dbReference type="GO" id="GO:0005576">
    <property type="term" value="C:extracellular region"/>
    <property type="evidence" value="ECO:0007669"/>
    <property type="project" value="UniProtKB-SubCell"/>
</dbReference>
<dbReference type="GO" id="GO:0099106">
    <property type="term" value="F:ion channel regulator activity"/>
    <property type="evidence" value="ECO:0007669"/>
    <property type="project" value="UniProtKB-KW"/>
</dbReference>
<dbReference type="GO" id="GO:0090729">
    <property type="term" value="F:toxin activity"/>
    <property type="evidence" value="ECO:0007669"/>
    <property type="project" value="UniProtKB-KW"/>
</dbReference>
<dbReference type="InterPro" id="IPR031565">
    <property type="entry name" value="T-conotoxin"/>
</dbReference>
<dbReference type="Pfam" id="PF16981">
    <property type="entry name" value="Chi-conotoxin"/>
    <property type="match status" value="1"/>
</dbReference>
<feature type="signal peptide" evidence="2">
    <location>
        <begin position="1"/>
        <end position="18"/>
    </location>
</feature>
<feature type="propeptide" id="PRO_5000566291" evidence="6">
    <location>
        <begin position="19"/>
        <end position="49"/>
    </location>
</feature>
<feature type="peptide" id="PRO_5000566292" description="Conotoxin Cal1.3" evidence="6">
    <location>
        <begin position="52"/>
        <end position="62"/>
    </location>
</feature>
<feature type="modified residue" description="4-hydroxyproline" evidence="1">
    <location>
        <position position="61"/>
    </location>
</feature>
<feature type="modified residue" description="Cysteine amide" evidence="6">
    <location>
        <position position="62"/>
    </location>
</feature>
<feature type="disulfide bond" evidence="1">
    <location>
        <begin position="52"/>
        <end position="62"/>
    </location>
</feature>
<feature type="disulfide bond" evidence="1">
    <location>
        <begin position="53"/>
        <end position="59"/>
    </location>
</feature>
<feature type="sequence conflict" description="In Ref. 1; ADB93089." evidence="5" ref="1">
    <original>R</original>
    <variation>K</variation>
    <location>
        <position position="55"/>
    </location>
</feature>
<proteinExistence type="evidence at protein level"/>
<protein>
    <recommendedName>
        <fullName evidence="5">Conotoxin Cal1.3</fullName>
    </recommendedName>
    <alternativeName>
        <fullName evidence="4">Conotoxin Cal1.1a</fullName>
    </alternativeName>
    <alternativeName>
        <fullName evidence="3">Conotoxin Cl1.3</fullName>
    </alternativeName>
</protein>
<reference key="1">
    <citation type="journal article" date="2010" name="Mol. Phylogenet. Evol.">
        <title>Evolution of Conus peptide toxins: analysis of Conus californicus Reeve, 1844.</title>
        <authorList>
            <person name="Biggs J.S."/>
            <person name="Watkins M."/>
            <person name="Puillandre N."/>
            <person name="Ownby J.P."/>
            <person name="Lopez-Vera E."/>
            <person name="Christensen S."/>
            <person name="Moreno K.J."/>
            <person name="Bernaldez J."/>
            <person name="Licea-Navarro A."/>
            <person name="Corneli P.S."/>
            <person name="Olivera B.M."/>
        </authorList>
    </citation>
    <scope>NUCLEOTIDE SEQUENCE [GENOMIC DNA]</scope>
</reference>
<reference key="2">
    <citation type="journal article" date="2011" name="Toxicon">
        <title>Diversity of conotoxin types from Conus californicus reflects a diversity of prey types and a novel evolutionary history.</title>
        <authorList>
            <person name="Elliger C.A."/>
            <person name="Richmond T.A."/>
            <person name="Lebaric Z.N."/>
            <person name="Pierce N.T."/>
            <person name="Sweedler J.V."/>
            <person name="Gilly W.F."/>
        </authorList>
    </citation>
    <scope>NUCLEOTIDE SEQUENCE [MRNA]</scope>
    <scope>AMIDATION AT CYS-62</scope>
    <source>
        <tissue>Venom duct</tissue>
    </source>
</reference>
<organism>
    <name type="scientific">Californiconus californicus</name>
    <name type="common">California cone</name>
    <name type="synonym">Conus californicus</name>
    <dbReference type="NCBI Taxonomy" id="1736779"/>
    <lineage>
        <taxon>Eukaryota</taxon>
        <taxon>Metazoa</taxon>
        <taxon>Spiralia</taxon>
        <taxon>Lophotrochozoa</taxon>
        <taxon>Mollusca</taxon>
        <taxon>Gastropoda</taxon>
        <taxon>Caenogastropoda</taxon>
        <taxon>Neogastropoda</taxon>
        <taxon>Conoidea</taxon>
        <taxon>Conidae</taxon>
        <taxon>Californiconus</taxon>
    </lineage>
</organism>
<sequence>MRCLPVFIILLLLASTAAVDVAGSKLKRRLERKPYQGSQAYVKKTAFGLRKCCKRHHGCHPCGRK</sequence>
<name>CT13_CONCL</name>
<keyword id="KW-0027">Amidation</keyword>
<keyword id="KW-1015">Disulfide bond</keyword>
<keyword id="KW-0379">Hydroxylation</keyword>
<keyword id="KW-0872">Ion channel impairing toxin</keyword>
<keyword id="KW-0528">Neurotoxin</keyword>
<keyword id="KW-0964">Secreted</keyword>
<keyword id="KW-0732">Signal</keyword>
<keyword id="KW-0800">Toxin</keyword>
<comment type="function">
    <text evidence="5">Probable neurotoxin with unknown target. Possibly targets ion channels.</text>
</comment>
<comment type="subcellular location">
    <subcellularLocation>
        <location evidence="6">Secreted</location>
    </subcellularLocation>
</comment>
<comment type="tissue specificity">
    <text evidence="6">Expressed by the venom duct.</text>
</comment>
<comment type="domain">
    <text>The cysteine framework is X (CC-CX[hydroxyPro]C).</text>
</comment>
<comment type="similarity">
    <text evidence="5">Belongs to the conotoxin T superfamily.</text>
</comment>